<accession>P61814</accession>
<accession>O02746</accession>
<accession>P79436</accession>
<accession>Q548Q9</accession>
<comment type="function">
    <text evidence="1">Receptor for a number of inflammatory CC-chemokines including CCL3/MIP-1-alpha, CCL4/MIP-1-beta and RANTES and subsequently transduces a signal by increasing the intracellular calcium ion level. May play a role in the control of granulocytic lineage proliferation or differentiation. Participates in T-lymphocyte migration to the infection site by acting as a chemotactic receptor.</text>
</comment>
<comment type="subunit">
    <text evidence="1">Interacts with PRAF2. Efficient ligand binding to CCL3/MIP-1alpha and CCL4/MIP-1beta requires sulfation, O-glycosylation and sialic acid modifications. Glycosylation on Ser-6 is required for efficient binding of CCL4. Interacts with GRK2. Interacts with ARRB1 and ARRB2. Interacts with CNIH4. Interacts with S100A4; this interaction stimulates T-lymphocyte chemotaxis.</text>
</comment>
<comment type="subcellular location">
    <subcellularLocation>
        <location evidence="2">Cell membrane</location>
        <topology evidence="2">Multi-pass membrane protein</topology>
    </subcellularLocation>
</comment>
<comment type="PTM">
    <text evidence="1">Sulfated on at least 2 of the N-terminal tyrosines. Sulfation is required for efficient binding of the chemokines, CCL3 and CCL4 (By similarity).</text>
</comment>
<comment type="PTM">
    <text evidence="1">Palmitoylation in the C-terminal is important for cell surface expression.</text>
</comment>
<comment type="PTM">
    <text evidence="1">Phosphorylation on serine residues in the C-terminal is stimulated by binding CC chemokines especially by APO-RANTES.</text>
</comment>
<comment type="PTM">
    <text evidence="1">O-glycosylated, but not N-glycosylated. Ser-6 appears to be the major site even if Ser-7 may be also O-glycosylated. Also sialylated glycans present which contribute to chemokine binding. Thr-16 and Ser-17 may also be glycosylated and, if so, with small moieties such as a T-antigen.</text>
</comment>
<comment type="similarity">
    <text evidence="4">Belongs to the G-protein coupled receptor 1 family.</text>
</comment>
<keyword id="KW-1003">Cell membrane</keyword>
<keyword id="KW-1015">Disulfide bond</keyword>
<keyword id="KW-0297">G-protein coupled receptor</keyword>
<keyword id="KW-0325">Glycoprotein</keyword>
<keyword id="KW-0449">Lipoprotein</keyword>
<keyword id="KW-0472">Membrane</keyword>
<keyword id="KW-0564">Palmitate</keyword>
<keyword id="KW-0597">Phosphoprotein</keyword>
<keyword id="KW-0675">Receptor</keyword>
<keyword id="KW-1185">Reference proteome</keyword>
<keyword id="KW-0765">Sulfation</keyword>
<keyword id="KW-0807">Transducer</keyword>
<keyword id="KW-0812">Transmembrane</keyword>
<keyword id="KW-1133">Transmembrane helix</keyword>
<gene>
    <name type="primary">CCR5</name>
    <name type="synonym">CMKBR5</name>
</gene>
<dbReference type="EMBL" id="AF005660">
    <property type="protein sequence ID" value="AAB62554.1"/>
    <property type="molecule type" value="Genomic_DNA"/>
</dbReference>
<dbReference type="EMBL" id="AF291669">
    <property type="protein sequence ID" value="AAK25740.1"/>
    <property type="molecule type" value="mRNA"/>
</dbReference>
<dbReference type="RefSeq" id="NP_001306312.1">
    <property type="nucleotide sequence ID" value="NM_001319383.1"/>
</dbReference>
<dbReference type="SMR" id="P61814"/>
<dbReference type="STRING" id="9541.ENSMFAP00000032465"/>
<dbReference type="BindingDB" id="P61814"/>
<dbReference type="ChEMBL" id="CHEMBL1075263"/>
<dbReference type="GlyCosmos" id="P61814">
    <property type="glycosylation" value="2 sites, No reported glycans"/>
</dbReference>
<dbReference type="eggNOG" id="KOG3656">
    <property type="taxonomic scope" value="Eukaryota"/>
</dbReference>
<dbReference type="Proteomes" id="UP000233100">
    <property type="component" value="Unplaced"/>
</dbReference>
<dbReference type="GO" id="GO:0005737">
    <property type="term" value="C:cytoplasm"/>
    <property type="evidence" value="ECO:0007669"/>
    <property type="project" value="TreeGrafter"/>
</dbReference>
<dbReference type="GO" id="GO:0009897">
    <property type="term" value="C:external side of plasma membrane"/>
    <property type="evidence" value="ECO:0000250"/>
    <property type="project" value="UniProtKB"/>
</dbReference>
<dbReference type="GO" id="GO:0016493">
    <property type="term" value="F:C-C chemokine receptor activity"/>
    <property type="evidence" value="ECO:0000250"/>
    <property type="project" value="UniProtKB"/>
</dbReference>
<dbReference type="GO" id="GO:0071791">
    <property type="term" value="F:chemokine (C-C motif) ligand 5 binding"/>
    <property type="evidence" value="ECO:0007669"/>
    <property type="project" value="TreeGrafter"/>
</dbReference>
<dbReference type="GO" id="GO:0019722">
    <property type="term" value="P:calcium-mediated signaling"/>
    <property type="evidence" value="ECO:0007669"/>
    <property type="project" value="TreeGrafter"/>
</dbReference>
<dbReference type="GO" id="GO:0060326">
    <property type="term" value="P:cell chemotaxis"/>
    <property type="evidence" value="ECO:0007669"/>
    <property type="project" value="TreeGrafter"/>
</dbReference>
<dbReference type="GO" id="GO:0006955">
    <property type="term" value="P:immune response"/>
    <property type="evidence" value="ECO:0007669"/>
    <property type="project" value="InterPro"/>
</dbReference>
<dbReference type="GO" id="GO:0006954">
    <property type="term" value="P:inflammatory response"/>
    <property type="evidence" value="ECO:0007669"/>
    <property type="project" value="InterPro"/>
</dbReference>
<dbReference type="GO" id="GO:0007204">
    <property type="term" value="P:positive regulation of cytosolic calcium ion concentration"/>
    <property type="evidence" value="ECO:0007669"/>
    <property type="project" value="TreeGrafter"/>
</dbReference>
<dbReference type="CDD" id="cd15184">
    <property type="entry name" value="7tmA_CCR5_CCR2"/>
    <property type="match status" value="1"/>
</dbReference>
<dbReference type="FunFam" id="1.20.1070.10:FF:000026">
    <property type="entry name" value="C-C chemokine receptor type 5"/>
    <property type="match status" value="1"/>
</dbReference>
<dbReference type="Gene3D" id="1.20.1070.10">
    <property type="entry name" value="Rhodopsin 7-helix transmembrane proteins"/>
    <property type="match status" value="1"/>
</dbReference>
<dbReference type="InterPro" id="IPR050119">
    <property type="entry name" value="CCR1-9-like"/>
</dbReference>
<dbReference type="InterPro" id="IPR002240">
    <property type="entry name" value="Chemokine_CCR5"/>
</dbReference>
<dbReference type="InterPro" id="IPR000355">
    <property type="entry name" value="Chemokine_rcpt"/>
</dbReference>
<dbReference type="InterPro" id="IPR000276">
    <property type="entry name" value="GPCR_Rhodpsn"/>
</dbReference>
<dbReference type="InterPro" id="IPR017452">
    <property type="entry name" value="GPCR_Rhodpsn_7TM"/>
</dbReference>
<dbReference type="PANTHER" id="PTHR10489:SF686">
    <property type="entry name" value="C-C CHEMOKINE RECEPTOR TYPE 5"/>
    <property type="match status" value="1"/>
</dbReference>
<dbReference type="PANTHER" id="PTHR10489">
    <property type="entry name" value="CELL ADHESION MOLECULE"/>
    <property type="match status" value="1"/>
</dbReference>
<dbReference type="Pfam" id="PF00001">
    <property type="entry name" value="7tm_1"/>
    <property type="match status" value="1"/>
</dbReference>
<dbReference type="PRINTS" id="PR00657">
    <property type="entry name" value="CCCHEMOKINER"/>
</dbReference>
<dbReference type="PRINTS" id="PR01110">
    <property type="entry name" value="CHEMOKINER5"/>
</dbReference>
<dbReference type="PRINTS" id="PR00237">
    <property type="entry name" value="GPCRRHODOPSN"/>
</dbReference>
<dbReference type="SUPFAM" id="SSF81321">
    <property type="entry name" value="Family A G protein-coupled receptor-like"/>
    <property type="match status" value="1"/>
</dbReference>
<dbReference type="PROSITE" id="PS00237">
    <property type="entry name" value="G_PROTEIN_RECEP_F1_1"/>
    <property type="match status" value="1"/>
</dbReference>
<dbReference type="PROSITE" id="PS50262">
    <property type="entry name" value="G_PROTEIN_RECEP_F1_2"/>
    <property type="match status" value="1"/>
</dbReference>
<organism>
    <name type="scientific">Macaca fascicularis</name>
    <name type="common">Crab-eating macaque</name>
    <name type="synonym">Cynomolgus monkey</name>
    <dbReference type="NCBI Taxonomy" id="9541"/>
    <lineage>
        <taxon>Eukaryota</taxon>
        <taxon>Metazoa</taxon>
        <taxon>Chordata</taxon>
        <taxon>Craniata</taxon>
        <taxon>Vertebrata</taxon>
        <taxon>Euteleostomi</taxon>
        <taxon>Mammalia</taxon>
        <taxon>Eutheria</taxon>
        <taxon>Euarchontoglires</taxon>
        <taxon>Primates</taxon>
        <taxon>Haplorrhini</taxon>
        <taxon>Catarrhini</taxon>
        <taxon>Cercopithecidae</taxon>
        <taxon>Cercopithecinae</taxon>
        <taxon>Macaca</taxon>
    </lineage>
</organism>
<sequence>MDYQVSSPTYDIDYYTSEPCQKINVKQIAARLLPPLYSLVFIFGFVGNILVVLILINCKRLKSMTDIYLLNLAISDLLFLLTVPFWAHYAAAQWDFGNTMCQLLTGLYFIGFFSGIFFIILLTIDRYLAIVHAVFALKARTVTFGVVTSVITWVVAVFASLPGIIFTRSQREGLHYTCSSHFPYSQYQFWKNFQTLKMVILGLVLPLLVMVICYSGILKTLLRCRNEKKRHRAVRLIFTIMIVYFLFWAPYNIVLLLNTFQEFFGLNNCSSSNRLDQAMQVTETLGMTHCCINPIIYAFVGEKFRNYLLVFFQKHIAKRFCKCCSIFQQEAPERASSVYTRSTGEQEISVGL</sequence>
<protein>
    <recommendedName>
        <fullName>C-C chemokine receptor type 5</fullName>
        <shortName>C-C CKR-5</shortName>
        <shortName>CC-CKR-5</shortName>
        <shortName>CCR-5</shortName>
        <shortName>CCR5</shortName>
    </recommendedName>
    <cdAntigenName>CD195</cdAntigenName>
</protein>
<name>CCR5_MACFA</name>
<proteinExistence type="evidence at transcript level"/>
<feature type="chain" id="PRO_0000069263" description="C-C chemokine receptor type 5">
    <location>
        <begin position="1"/>
        <end position="352"/>
    </location>
</feature>
<feature type="topological domain" description="Extracellular" evidence="3">
    <location>
        <begin position="1"/>
        <end position="30"/>
    </location>
</feature>
<feature type="transmembrane region" description="Helical; Name=1" evidence="3">
    <location>
        <begin position="31"/>
        <end position="58"/>
    </location>
</feature>
<feature type="topological domain" description="Cytoplasmic" evidence="3">
    <location>
        <begin position="59"/>
        <end position="68"/>
    </location>
</feature>
<feature type="transmembrane region" description="Helical; Name=2" evidence="3">
    <location>
        <begin position="69"/>
        <end position="89"/>
    </location>
</feature>
<feature type="topological domain" description="Extracellular" evidence="3">
    <location>
        <begin position="90"/>
        <end position="102"/>
    </location>
</feature>
<feature type="transmembrane region" description="Helical; Name=3" evidence="3">
    <location>
        <begin position="103"/>
        <end position="124"/>
    </location>
</feature>
<feature type="topological domain" description="Cytoplasmic" evidence="3">
    <location>
        <begin position="125"/>
        <end position="141"/>
    </location>
</feature>
<feature type="transmembrane region" description="Helical; Name=4" evidence="3">
    <location>
        <begin position="142"/>
        <end position="166"/>
    </location>
</feature>
<feature type="topological domain" description="Extracellular" evidence="3">
    <location>
        <begin position="167"/>
        <end position="198"/>
    </location>
</feature>
<feature type="transmembrane region" description="Helical; Name=5" evidence="3">
    <location>
        <begin position="199"/>
        <end position="218"/>
    </location>
</feature>
<feature type="topological domain" description="Cytoplasmic" evidence="3">
    <location>
        <begin position="219"/>
        <end position="235"/>
    </location>
</feature>
<feature type="transmembrane region" description="Helical; Name=6" evidence="3">
    <location>
        <begin position="236"/>
        <end position="260"/>
    </location>
</feature>
<feature type="topological domain" description="Extracellular" evidence="3">
    <location>
        <begin position="261"/>
        <end position="277"/>
    </location>
</feature>
<feature type="transmembrane region" description="Helical; Name=7" evidence="3">
    <location>
        <begin position="278"/>
        <end position="301"/>
    </location>
</feature>
<feature type="topological domain" description="Cytoplasmic" evidence="3">
    <location>
        <begin position="302"/>
        <end position="352"/>
    </location>
</feature>
<feature type="modified residue" description="Sulfotyrosine" evidence="1">
    <location>
        <position position="3"/>
    </location>
</feature>
<feature type="modified residue" description="Sulfotyrosine" evidence="3">
    <location>
        <position position="10"/>
    </location>
</feature>
<feature type="modified residue" description="Sulfotyrosine" evidence="3">
    <location>
        <position position="14"/>
    </location>
</feature>
<feature type="modified residue" description="Sulfotyrosine" evidence="3">
    <location>
        <position position="15"/>
    </location>
</feature>
<feature type="modified residue" description="Phosphoserine; by BARK1" evidence="1">
    <location>
        <position position="336"/>
    </location>
</feature>
<feature type="modified residue" description="Phosphoserine; by BARK1" evidence="1">
    <location>
        <position position="337"/>
    </location>
</feature>
<feature type="modified residue" description="Phosphoserine; by BARK1" evidence="1">
    <location>
        <position position="342"/>
    </location>
</feature>
<feature type="modified residue" description="Phosphoserine; by BARK1" evidence="1">
    <location>
        <position position="349"/>
    </location>
</feature>
<feature type="lipid moiety-binding region" description="S-palmitoyl cysteine" evidence="1">
    <location>
        <position position="321"/>
    </location>
</feature>
<feature type="lipid moiety-binding region" description="S-palmitoyl cysteine" evidence="1">
    <location>
        <position position="323"/>
    </location>
</feature>
<feature type="lipid moiety-binding region" description="S-palmitoyl cysteine" evidence="1">
    <location>
        <position position="324"/>
    </location>
</feature>
<feature type="glycosylation site" description="O-linked (GalNAc...) serine" evidence="1">
    <location>
        <position position="6"/>
    </location>
</feature>
<feature type="glycosylation site" description="O-linked (GalNAc...) serine" evidence="1">
    <location>
        <position position="7"/>
    </location>
</feature>
<feature type="disulfide bond" evidence="1">
    <location>
        <begin position="20"/>
        <end position="269"/>
    </location>
</feature>
<feature type="disulfide bond" evidence="4">
    <location>
        <begin position="101"/>
        <end position="178"/>
    </location>
</feature>
<reference key="1">
    <citation type="journal article" date="1997" name="Proc. Natl. Acad. Sci. U.S.A.">
        <title>Differential utilization of CCR5 by macrophage and T cell tropic simian immunodeficiency virus strains.</title>
        <authorList>
            <person name="Edinger A.L."/>
            <person name="Amedee A."/>
            <person name="Miller K."/>
            <person name="Doranz B.J."/>
            <person name="Endres M."/>
            <person name="Sharron M."/>
            <person name="Samson M."/>
            <person name="Lu Z.-H."/>
            <person name="Clements J.E."/>
            <person name="Murphey-Corb M."/>
            <person name="Peiper S.C."/>
            <person name="Parmentier M."/>
            <person name="Broder C.C."/>
            <person name="Doms R.W."/>
        </authorList>
    </citation>
    <scope>NUCLEOTIDE SEQUENCE [GENOMIC DNA]</scope>
</reference>
<reference key="2">
    <citation type="submission" date="2000-08" db="EMBL/GenBank/DDBJ databases">
        <title>Cloning, sequencing and expression of chemokine receptors, which may function as SIV/SHIV co-receptors, from cynomolgus macaque PBMCs.</title>
        <authorList>
            <person name="Wade-Evans A.M."/>
            <person name="Javan C."/>
            <person name="Jenkins A."/>
            <person name="Russell J."/>
        </authorList>
    </citation>
    <scope>NUCLEOTIDE SEQUENCE [MRNA]</scope>
</reference>
<evidence type="ECO:0000250" key="1">
    <source>
        <dbReference type="UniProtKB" id="P51681"/>
    </source>
</evidence>
<evidence type="ECO:0000250" key="2">
    <source>
        <dbReference type="UniProtKB" id="Q9XT76"/>
    </source>
</evidence>
<evidence type="ECO:0000255" key="3"/>
<evidence type="ECO:0000255" key="4">
    <source>
        <dbReference type="PROSITE-ProRule" id="PRU00521"/>
    </source>
</evidence>